<dbReference type="EC" id="3.4.21.-" evidence="1"/>
<dbReference type="SMR" id="C0HLA1"/>
<dbReference type="GO" id="GO:0005576">
    <property type="term" value="C:extracellular region"/>
    <property type="evidence" value="ECO:0007669"/>
    <property type="project" value="UniProtKB-SubCell"/>
</dbReference>
<dbReference type="GO" id="GO:0008236">
    <property type="term" value="F:serine-type peptidase activity"/>
    <property type="evidence" value="ECO:0007669"/>
    <property type="project" value="UniProtKB-KW"/>
</dbReference>
<dbReference type="GO" id="GO:0090729">
    <property type="term" value="F:toxin activity"/>
    <property type="evidence" value="ECO:0007669"/>
    <property type="project" value="UniProtKB-KW"/>
</dbReference>
<dbReference type="GO" id="GO:0006508">
    <property type="term" value="P:proteolysis"/>
    <property type="evidence" value="ECO:0007669"/>
    <property type="project" value="UniProtKB-KW"/>
</dbReference>
<dbReference type="Gene3D" id="2.40.10.10">
    <property type="entry name" value="Trypsin-like serine proteases"/>
    <property type="match status" value="1"/>
</dbReference>
<dbReference type="InterPro" id="IPR009003">
    <property type="entry name" value="Peptidase_S1_PA"/>
</dbReference>
<dbReference type="InterPro" id="IPR043504">
    <property type="entry name" value="Peptidase_S1_PA_chymotrypsin"/>
</dbReference>
<dbReference type="SUPFAM" id="SSF50494">
    <property type="entry name" value="Trypsin-like serine proteases"/>
    <property type="match status" value="1"/>
</dbReference>
<protein>
    <recommendedName>
        <fullName evidence="3">Thrombin-like enzyme LmrSP-2</fullName>
        <shortName evidence="4">SVTLE</shortName>
        <ecNumber evidence="1">3.4.21.-</ecNumber>
    </recommendedName>
    <alternativeName>
        <fullName evidence="4">Snake venom serine protease</fullName>
        <shortName evidence="4">SVSP</shortName>
    </alternativeName>
</protein>
<name>VSP2_LACMR</name>
<keyword id="KW-1204">Blood coagulation cascade activating toxin</keyword>
<keyword id="KW-0903">Direct protein sequencing</keyword>
<keyword id="KW-1206">Fibrinogenolytic toxin</keyword>
<keyword id="KW-1199">Hemostasis impairing toxin</keyword>
<keyword id="KW-0378">Hydrolase</keyword>
<keyword id="KW-0645">Protease</keyword>
<keyword id="KW-0964">Secreted</keyword>
<keyword id="KW-0720">Serine protease</keyword>
<keyword id="KW-0800">Toxin</keyword>
<proteinExistence type="evidence at protein level"/>
<sequence>VIGGDECNINEHRFLVALYDPDGFFCGGTL</sequence>
<organism evidence="3">
    <name type="scientific">Lachesis muta rhombeata</name>
    <name type="common">Bushmaster</name>
    <dbReference type="NCBI Taxonomy" id="60219"/>
    <lineage>
        <taxon>Eukaryota</taxon>
        <taxon>Metazoa</taxon>
        <taxon>Chordata</taxon>
        <taxon>Craniata</taxon>
        <taxon>Vertebrata</taxon>
        <taxon>Euteleostomi</taxon>
        <taxon>Lepidosauria</taxon>
        <taxon>Squamata</taxon>
        <taxon>Bifurcata</taxon>
        <taxon>Unidentata</taxon>
        <taxon>Episquamata</taxon>
        <taxon>Toxicofera</taxon>
        <taxon>Serpentes</taxon>
        <taxon>Colubroidea</taxon>
        <taxon>Viperidae</taxon>
        <taxon>Crotalinae</taxon>
        <taxon>Lachesis</taxon>
    </lineage>
</organism>
<reference evidence="4" key="1">
    <citation type="journal article" date="2019" name="J. Venom. Anim. Toxins Incl. Trop. Dis.">
        <title>Subproteome of Lachesis muta rhombeata venom and preliminary studies on LmrSP-4, a novel snake venom serine proteinase.</title>
        <authorList>
            <person name="Wiezel G.A."/>
            <person name="Bordon K.C."/>
            <person name="Silva R.R."/>
            <person name="Gomes M.S."/>
            <person name="Cabral H."/>
            <person name="Rodrigues V.M."/>
            <person name="Ueberheide B."/>
            <person name="Arantes E.C."/>
        </authorList>
    </citation>
    <scope>PROTEIN SEQUENCE</scope>
    <scope>SUBCELLULAR LOCATION</scope>
    <source>
        <tissue evidence="3">Venom</tissue>
    </source>
</reference>
<feature type="chain" id="PRO_0000447685" description="Thrombin-like enzyme LmrSP-2" evidence="2">
    <location>
        <begin position="1"/>
        <end position="30" status="greater than"/>
    </location>
</feature>
<feature type="non-terminal residue" evidence="5">
    <location>
        <position position="30"/>
    </location>
</feature>
<evidence type="ECO:0000250" key="1">
    <source>
        <dbReference type="UniProtKB" id="P33589"/>
    </source>
</evidence>
<evidence type="ECO:0000269" key="2">
    <source>
    </source>
</evidence>
<evidence type="ECO:0000303" key="3">
    <source>
    </source>
</evidence>
<evidence type="ECO:0000305" key="4"/>
<evidence type="ECO:0000305" key="5">
    <source>
    </source>
</evidence>
<accession>C0HLA1</accession>
<comment type="function">
    <text evidence="1">Thrombin-like snake venom serine protease that cleaves alpha-chain of fibrinogen (FGA) releases only fibrinopeptide A. Shows coagulant, esterase and amidase activities.</text>
</comment>
<comment type="subcellular location">
    <subcellularLocation>
        <location evidence="2">Secreted</location>
    </subcellularLocation>
</comment>
<comment type="tissue specificity">
    <text evidence="5">Expressed by the venom gland.</text>
</comment>
<comment type="similarity">
    <text evidence="4">Belongs to the peptidase S1 family. Snake venom subfamily.</text>
</comment>